<reference key="1">
    <citation type="submission" date="2007-06" db="EMBL/GenBank/DDBJ databases">
        <title>Complete sequence of chromosome of Staphylococcus aureus subsp. aureus JH1.</title>
        <authorList>
            <consortium name="US DOE Joint Genome Institute"/>
            <person name="Copeland A."/>
            <person name="Lucas S."/>
            <person name="Lapidus A."/>
            <person name="Barry K."/>
            <person name="Detter J.C."/>
            <person name="Glavina del Rio T."/>
            <person name="Hammon N."/>
            <person name="Israni S."/>
            <person name="Dalin E."/>
            <person name="Tice H."/>
            <person name="Pitluck S."/>
            <person name="Chain P."/>
            <person name="Malfatti S."/>
            <person name="Shin M."/>
            <person name="Vergez L."/>
            <person name="Schmutz J."/>
            <person name="Larimer F."/>
            <person name="Land M."/>
            <person name="Hauser L."/>
            <person name="Kyrpides N."/>
            <person name="Ivanova N."/>
            <person name="Tomasz A."/>
            <person name="Richardson P."/>
        </authorList>
    </citation>
    <scope>NUCLEOTIDE SEQUENCE [LARGE SCALE GENOMIC DNA]</scope>
    <source>
        <strain>JH1</strain>
    </source>
</reference>
<comment type="function">
    <text evidence="1">Catalyzes specifically the NADPH-dependent reduction of coenzyme A disulfide.</text>
</comment>
<comment type="catalytic activity">
    <reaction evidence="1">
        <text>NADP(+) + 2 CoA = CoA-disulfide + NADPH + H(+)</text>
        <dbReference type="Rhea" id="RHEA:14705"/>
        <dbReference type="ChEBI" id="CHEBI:15378"/>
        <dbReference type="ChEBI" id="CHEBI:57287"/>
        <dbReference type="ChEBI" id="CHEBI:57783"/>
        <dbReference type="ChEBI" id="CHEBI:58349"/>
        <dbReference type="ChEBI" id="CHEBI:62209"/>
        <dbReference type="EC" id="1.8.1.14"/>
    </reaction>
</comment>
<comment type="cofactor">
    <cofactor evidence="1">
        <name>FAD</name>
        <dbReference type="ChEBI" id="CHEBI:57692"/>
    </cofactor>
    <text evidence="1">Binds 1 FAD per subunit.</text>
</comment>
<comment type="subunit">
    <text evidence="1">Homodimer.</text>
</comment>
<comment type="domain">
    <text evidence="1">Contains 2 FAD binding domains and a single NADPH binding domain.</text>
</comment>
<comment type="miscellaneous">
    <text evidence="1">Reduction of disulfides occurs by a thiol-disulfide exchange reaction, but involves only a single catalytic cysteine residue that forms a stable mixed disulfide with CoA during catalysis.</text>
</comment>
<comment type="similarity">
    <text evidence="1">Belongs to the class-III pyridine nucleotide-disulfide oxidoreductase family.</text>
</comment>
<feature type="chain" id="PRO_1000088035" description="Coenzyme A disulfide reductase">
    <location>
        <begin position="1"/>
        <end position="438"/>
    </location>
</feature>
<feature type="active site" description="Nucleophile" evidence="1">
    <location>
        <position position="43"/>
    </location>
</feature>
<feature type="active site" description="Redox-active" evidence="1">
    <location>
        <position position="43"/>
    </location>
</feature>
<feature type="binding site" evidence="1">
    <location>
        <begin position="8"/>
        <end position="33"/>
    </location>
    <ligand>
        <name>FAD</name>
        <dbReference type="ChEBI" id="CHEBI:57692"/>
    </ligand>
</feature>
<feature type="binding site" evidence="1">
    <location>
        <position position="15"/>
    </location>
    <ligand>
        <name>substrate</name>
    </ligand>
</feature>
<feature type="binding site" evidence="1">
    <location>
        <position position="19"/>
    </location>
    <ligand>
        <name>substrate</name>
    </ligand>
</feature>
<feature type="binding site" evidence="1">
    <location>
        <position position="22"/>
    </location>
    <ligand>
        <name>substrate</name>
    </ligand>
</feature>
<feature type="binding site" evidence="1">
    <location>
        <position position="39"/>
    </location>
    <ligand>
        <name>substrate</name>
    </ligand>
</feature>
<feature type="binding site" evidence="1">
    <location>
        <position position="42"/>
    </location>
    <ligand>
        <name>substrate</name>
    </ligand>
</feature>
<feature type="binding site" evidence="1">
    <location>
        <position position="71"/>
    </location>
    <ligand>
        <name>substrate</name>
    </ligand>
</feature>
<feature type="binding site" evidence="1">
    <location>
        <begin position="151"/>
        <end position="166"/>
    </location>
    <ligand>
        <name>NADP(+)</name>
        <dbReference type="ChEBI" id="CHEBI:58349"/>
    </ligand>
</feature>
<feature type="binding site" evidence="1">
    <location>
        <begin position="267"/>
        <end position="277"/>
    </location>
    <ligand>
        <name>FAD</name>
        <dbReference type="ChEBI" id="CHEBI:57692"/>
    </ligand>
</feature>
<feature type="binding site" evidence="1">
    <location>
        <position position="299"/>
    </location>
    <ligand>
        <name>substrate</name>
    </ligand>
</feature>
<feature type="binding site" evidence="1">
    <location>
        <position position="419"/>
    </location>
    <ligand>
        <name>FAD</name>
        <dbReference type="ChEBI" id="CHEBI:57692"/>
    </ligand>
</feature>
<feature type="binding site" evidence="1">
    <location>
        <position position="427"/>
    </location>
    <ligand>
        <name>substrate</name>
    </ligand>
</feature>
<protein>
    <recommendedName>
        <fullName evidence="1">Coenzyme A disulfide reductase</fullName>
        <shortName evidence="1">CoA-disulfide reductase</shortName>
        <shortName evidence="1">CoADR</shortName>
        <ecNumber evidence="1">1.8.1.14</ecNumber>
    </recommendedName>
</protein>
<accession>A6U077</accession>
<gene>
    <name evidence="1" type="primary">cdr</name>
    <name type="ordered locus">SaurJH1_0989</name>
</gene>
<proteinExistence type="inferred from homology"/>
<sequence>MPKIVVVGAVAGGATCASQIRRLDKESDIIIFEKDRDMSFANCALPYVIGEVVEDRKYALVYTPEKFYDRKQITVKTYHEVIAINDERQTVTVLNRKTNEQFEESYDKLILSPGASANSLGFESDITFTLRNLEDTDAIDQFIKANQVDKVLVIGAGYVSLEVLENLYERGLHPTLIHRSDKINKLMDADMNQPILDELDKREIPYRLNEEIDAINGNEITFKSGKVEHYDMIIEGVGTHPNSKLIESSNIKLDRKGFIPVNDKFETNVPNIYAIGDIATSHYRHVDLPASVPLAWGAHRAASIVAEQIAGNDTIEFKGFLGNNIVKFFDYTFASVGVKPNELKQFDYKMVEVTQGAHANYYPGNSPLHLRVYYDTSNRQILRAAAVGKEGADKRIDVLSMAMMNQLTVDELTEFEVAYAPPYSHPKDLINMIGYKAK</sequence>
<keyword id="KW-0274">FAD</keyword>
<keyword id="KW-0285">Flavoprotein</keyword>
<keyword id="KW-0521">NADP</keyword>
<keyword id="KW-0560">Oxidoreductase</keyword>
<keyword id="KW-0676">Redox-active center</keyword>
<organism>
    <name type="scientific">Staphylococcus aureus (strain JH1)</name>
    <dbReference type="NCBI Taxonomy" id="359787"/>
    <lineage>
        <taxon>Bacteria</taxon>
        <taxon>Bacillati</taxon>
        <taxon>Bacillota</taxon>
        <taxon>Bacilli</taxon>
        <taxon>Bacillales</taxon>
        <taxon>Staphylococcaceae</taxon>
        <taxon>Staphylococcus</taxon>
    </lineage>
</organism>
<evidence type="ECO:0000255" key="1">
    <source>
        <dbReference type="HAMAP-Rule" id="MF_01608"/>
    </source>
</evidence>
<name>CDR_STAA2</name>
<dbReference type="EC" id="1.8.1.14" evidence="1"/>
<dbReference type="EMBL" id="CP000736">
    <property type="protein sequence ID" value="ABR51845.1"/>
    <property type="molecule type" value="Genomic_DNA"/>
</dbReference>
<dbReference type="SMR" id="A6U077"/>
<dbReference type="KEGG" id="sah:SaurJH1_0989"/>
<dbReference type="HOGENOM" id="CLU_003291_1_3_9"/>
<dbReference type="GO" id="GO:0050451">
    <property type="term" value="F:CoA-disulfide reductase (NADPH) activity"/>
    <property type="evidence" value="ECO:0007669"/>
    <property type="project" value="UniProtKB-UniRule"/>
</dbReference>
<dbReference type="GO" id="GO:0050660">
    <property type="term" value="F:flavin adenine dinucleotide binding"/>
    <property type="evidence" value="ECO:0007669"/>
    <property type="project" value="UniProtKB-UniRule"/>
</dbReference>
<dbReference type="GO" id="GO:0050661">
    <property type="term" value="F:NADP binding"/>
    <property type="evidence" value="ECO:0007669"/>
    <property type="project" value="UniProtKB-UniRule"/>
</dbReference>
<dbReference type="GO" id="GO:0003756">
    <property type="term" value="F:protein disulfide isomerase activity"/>
    <property type="evidence" value="ECO:0007669"/>
    <property type="project" value="UniProtKB-UniRule"/>
</dbReference>
<dbReference type="Gene3D" id="3.30.390.30">
    <property type="match status" value="1"/>
</dbReference>
<dbReference type="Gene3D" id="3.50.50.60">
    <property type="entry name" value="FAD/NAD(P)-binding domain"/>
    <property type="match status" value="2"/>
</dbReference>
<dbReference type="HAMAP" id="MF_01608">
    <property type="entry name" value="CoA_diS_reduct"/>
    <property type="match status" value="1"/>
</dbReference>
<dbReference type="InterPro" id="IPR017758">
    <property type="entry name" value="CoA_disulphide_reductase"/>
</dbReference>
<dbReference type="InterPro" id="IPR023536">
    <property type="entry name" value="CoA_disulphide_reductase_staph"/>
</dbReference>
<dbReference type="InterPro" id="IPR050260">
    <property type="entry name" value="FAD-bd_OxRdtase"/>
</dbReference>
<dbReference type="InterPro" id="IPR036188">
    <property type="entry name" value="FAD/NAD-bd_sf"/>
</dbReference>
<dbReference type="InterPro" id="IPR023753">
    <property type="entry name" value="FAD/NAD-binding_dom"/>
</dbReference>
<dbReference type="InterPro" id="IPR016156">
    <property type="entry name" value="FAD/NAD-linked_Rdtase_dimer_sf"/>
</dbReference>
<dbReference type="InterPro" id="IPR004099">
    <property type="entry name" value="Pyr_nucl-diS_OxRdtase_dimer"/>
</dbReference>
<dbReference type="NCBIfam" id="TIGR03385">
    <property type="entry name" value="CoA_CoA_reduc"/>
    <property type="match status" value="1"/>
</dbReference>
<dbReference type="NCBIfam" id="NF010037">
    <property type="entry name" value="PRK13512.1"/>
    <property type="match status" value="1"/>
</dbReference>
<dbReference type="PANTHER" id="PTHR43429:SF1">
    <property type="entry name" value="NAD(P)H SULFUR OXIDOREDUCTASE (COA-DEPENDENT)"/>
    <property type="match status" value="1"/>
</dbReference>
<dbReference type="PANTHER" id="PTHR43429">
    <property type="entry name" value="PYRIDINE NUCLEOTIDE-DISULFIDE OXIDOREDUCTASE DOMAIN-CONTAINING"/>
    <property type="match status" value="1"/>
</dbReference>
<dbReference type="Pfam" id="PF07992">
    <property type="entry name" value="Pyr_redox_2"/>
    <property type="match status" value="1"/>
</dbReference>
<dbReference type="Pfam" id="PF02852">
    <property type="entry name" value="Pyr_redox_dim"/>
    <property type="match status" value="1"/>
</dbReference>
<dbReference type="PRINTS" id="PR00368">
    <property type="entry name" value="FADPNR"/>
</dbReference>
<dbReference type="PRINTS" id="PR00411">
    <property type="entry name" value="PNDRDTASEI"/>
</dbReference>
<dbReference type="SUPFAM" id="SSF51905">
    <property type="entry name" value="FAD/NAD(P)-binding domain"/>
    <property type="match status" value="1"/>
</dbReference>
<dbReference type="SUPFAM" id="SSF55424">
    <property type="entry name" value="FAD/NAD-linked reductases, dimerisation (C-terminal) domain"/>
    <property type="match status" value="1"/>
</dbReference>